<feature type="chain" id="PRO_0000328007" description="Probable U6 snRNA-associated Sm-like protein LSm4">
    <location>
        <begin position="1"/>
        <end position="177"/>
    </location>
</feature>
<feature type="domain" description="Sm" evidence="2">
    <location>
        <begin position="2"/>
        <end position="75"/>
    </location>
</feature>
<feature type="region of interest" description="Disordered" evidence="3">
    <location>
        <begin position="87"/>
        <end position="177"/>
    </location>
</feature>
<feature type="compositionally biased region" description="Basic and acidic residues" evidence="3">
    <location>
        <begin position="110"/>
        <end position="122"/>
    </location>
</feature>
<feature type="compositionally biased region" description="Gly residues" evidence="3">
    <location>
        <begin position="126"/>
        <end position="139"/>
    </location>
</feature>
<feature type="compositionally biased region" description="Basic and acidic residues" evidence="3">
    <location>
        <begin position="146"/>
        <end position="163"/>
    </location>
</feature>
<comment type="function">
    <text evidence="1">Plays a role in pre-mRNA splicing as component of the U4/U6-U5 tri-snRNP complex that is involved in spliceosome assembly, and as component of the precatalytic spliceosome (spliceosome B complex). The heptameric LSM2-8 complex binds specifically to the 3'-terminal U-tract of U6 snRNA.</text>
</comment>
<comment type="subunit">
    <text evidence="1">Component of the precatalytic spliceosome (spliceosome B complex). Component of the U4/U6-U5 tri-snRNP complex, a building block of the precatalytic spliceosome (spliceosome B complex). LSM2, LSM3, LSM4, LSM5, LSM6, LSM7 and LSM8 form a heptameric, ring-shaped subcomplex (the LSM2-8 complex) that is part of the U4/U6-U5 tri-snRNP complex and the precatalytic spliceosome.</text>
</comment>
<comment type="subcellular location">
    <subcellularLocation>
        <location evidence="1">Nucleus</location>
    </subcellularLocation>
</comment>
<comment type="similarity">
    <text evidence="4">Belongs to the snRNP Sm proteins family.</text>
</comment>
<sequence>MLPLSLLRTGQGHQIMVELKNGETYNGLLVNCDNWMNINLKNVIRTSKDSDKFWKIQSCYIRGNTIKYISVPDEIIDLVAEEEQTLRTTYQQRNDSNRGRGRGDGFAGRGRGDASGRGRGDNSYRGGRGGGNNNSGGGDSSPAGRGRGEYRGSSRGGRGDFRGSSRGGRGGNNNSTA</sequence>
<keyword id="KW-0507">mRNA processing</keyword>
<keyword id="KW-0508">mRNA splicing</keyword>
<keyword id="KW-0539">Nucleus</keyword>
<keyword id="KW-1185">Reference proteome</keyword>
<keyword id="KW-0687">Ribonucleoprotein</keyword>
<keyword id="KW-0694">RNA-binding</keyword>
<keyword id="KW-0747">Spliceosome</keyword>
<accession>Q54KX4</accession>
<proteinExistence type="inferred from homology"/>
<reference key="1">
    <citation type="journal article" date="2005" name="Nature">
        <title>The genome of the social amoeba Dictyostelium discoideum.</title>
        <authorList>
            <person name="Eichinger L."/>
            <person name="Pachebat J.A."/>
            <person name="Gloeckner G."/>
            <person name="Rajandream M.A."/>
            <person name="Sucgang R."/>
            <person name="Berriman M."/>
            <person name="Song J."/>
            <person name="Olsen R."/>
            <person name="Szafranski K."/>
            <person name="Xu Q."/>
            <person name="Tunggal B."/>
            <person name="Kummerfeld S."/>
            <person name="Madera M."/>
            <person name="Konfortov B.A."/>
            <person name="Rivero F."/>
            <person name="Bankier A.T."/>
            <person name="Lehmann R."/>
            <person name="Hamlin N."/>
            <person name="Davies R."/>
            <person name="Gaudet P."/>
            <person name="Fey P."/>
            <person name="Pilcher K."/>
            <person name="Chen G."/>
            <person name="Saunders D."/>
            <person name="Sodergren E.J."/>
            <person name="Davis P."/>
            <person name="Kerhornou A."/>
            <person name="Nie X."/>
            <person name="Hall N."/>
            <person name="Anjard C."/>
            <person name="Hemphill L."/>
            <person name="Bason N."/>
            <person name="Farbrother P."/>
            <person name="Desany B."/>
            <person name="Just E."/>
            <person name="Morio T."/>
            <person name="Rost R."/>
            <person name="Churcher C.M."/>
            <person name="Cooper J."/>
            <person name="Haydock S."/>
            <person name="van Driessche N."/>
            <person name="Cronin A."/>
            <person name="Goodhead I."/>
            <person name="Muzny D.M."/>
            <person name="Mourier T."/>
            <person name="Pain A."/>
            <person name="Lu M."/>
            <person name="Harper D."/>
            <person name="Lindsay R."/>
            <person name="Hauser H."/>
            <person name="James K.D."/>
            <person name="Quiles M."/>
            <person name="Madan Babu M."/>
            <person name="Saito T."/>
            <person name="Buchrieser C."/>
            <person name="Wardroper A."/>
            <person name="Felder M."/>
            <person name="Thangavelu M."/>
            <person name="Johnson D."/>
            <person name="Knights A."/>
            <person name="Loulseged H."/>
            <person name="Mungall K.L."/>
            <person name="Oliver K."/>
            <person name="Price C."/>
            <person name="Quail M.A."/>
            <person name="Urushihara H."/>
            <person name="Hernandez J."/>
            <person name="Rabbinowitsch E."/>
            <person name="Steffen D."/>
            <person name="Sanders M."/>
            <person name="Ma J."/>
            <person name="Kohara Y."/>
            <person name="Sharp S."/>
            <person name="Simmonds M.N."/>
            <person name="Spiegler S."/>
            <person name="Tivey A."/>
            <person name="Sugano S."/>
            <person name="White B."/>
            <person name="Walker D."/>
            <person name="Woodward J.R."/>
            <person name="Winckler T."/>
            <person name="Tanaka Y."/>
            <person name="Shaulsky G."/>
            <person name="Schleicher M."/>
            <person name="Weinstock G.M."/>
            <person name="Rosenthal A."/>
            <person name="Cox E.C."/>
            <person name="Chisholm R.L."/>
            <person name="Gibbs R.A."/>
            <person name="Loomis W.F."/>
            <person name="Platzer M."/>
            <person name="Kay R.R."/>
            <person name="Williams J.G."/>
            <person name="Dear P.H."/>
            <person name="Noegel A.A."/>
            <person name="Barrell B.G."/>
            <person name="Kuspa A."/>
        </authorList>
    </citation>
    <scope>NUCLEOTIDE SEQUENCE [LARGE SCALE GENOMIC DNA]</scope>
    <source>
        <strain>AX4</strain>
    </source>
</reference>
<evidence type="ECO:0000250" key="1">
    <source>
        <dbReference type="UniProtKB" id="Q9Y4Z0"/>
    </source>
</evidence>
<evidence type="ECO:0000255" key="2">
    <source>
        <dbReference type="PROSITE-ProRule" id="PRU01346"/>
    </source>
</evidence>
<evidence type="ECO:0000256" key="3">
    <source>
        <dbReference type="SAM" id="MobiDB-lite"/>
    </source>
</evidence>
<evidence type="ECO:0000305" key="4"/>
<protein>
    <recommendedName>
        <fullName>Probable U6 snRNA-associated Sm-like protein LSm4</fullName>
    </recommendedName>
</protein>
<gene>
    <name type="primary">lsm4</name>
    <name type="ORF">DDB_G0287053</name>
</gene>
<name>LSM4_DICDI</name>
<organism>
    <name type="scientific">Dictyostelium discoideum</name>
    <name type="common">Social amoeba</name>
    <dbReference type="NCBI Taxonomy" id="44689"/>
    <lineage>
        <taxon>Eukaryota</taxon>
        <taxon>Amoebozoa</taxon>
        <taxon>Evosea</taxon>
        <taxon>Eumycetozoa</taxon>
        <taxon>Dictyostelia</taxon>
        <taxon>Dictyosteliales</taxon>
        <taxon>Dictyosteliaceae</taxon>
        <taxon>Dictyostelium</taxon>
    </lineage>
</organism>
<dbReference type="EMBL" id="AAFI02000096">
    <property type="protein sequence ID" value="EAL63891.1"/>
    <property type="molecule type" value="Genomic_DNA"/>
</dbReference>
<dbReference type="RefSeq" id="XP_637396.1">
    <property type="nucleotide sequence ID" value="XM_632304.1"/>
</dbReference>
<dbReference type="SMR" id="Q54KX4"/>
<dbReference type="FunCoup" id="Q54KX4">
    <property type="interactions" value="35"/>
</dbReference>
<dbReference type="STRING" id="44689.Q54KX4"/>
<dbReference type="PaxDb" id="44689-DDB0233378"/>
<dbReference type="EnsemblProtists" id="EAL63891">
    <property type="protein sequence ID" value="EAL63891"/>
    <property type="gene ID" value="DDB_G0287053"/>
</dbReference>
<dbReference type="GeneID" id="8625927"/>
<dbReference type="KEGG" id="ddi:DDB_G0287053"/>
<dbReference type="dictyBase" id="DDB_G0287053">
    <property type="gene designation" value="lsm4"/>
</dbReference>
<dbReference type="VEuPathDB" id="AmoebaDB:DDB_G0287053"/>
<dbReference type="eggNOG" id="KOG3293">
    <property type="taxonomic scope" value="Eukaryota"/>
</dbReference>
<dbReference type="HOGENOM" id="CLU_099537_2_1_1"/>
<dbReference type="InParanoid" id="Q54KX4"/>
<dbReference type="OMA" id="RGAFGNR"/>
<dbReference type="PhylomeDB" id="Q54KX4"/>
<dbReference type="Reactome" id="R-DDI-430039">
    <property type="pathway name" value="mRNA decay by 5' to 3' exoribonuclease"/>
</dbReference>
<dbReference type="PRO" id="PR:Q54KX4"/>
<dbReference type="Proteomes" id="UP000002195">
    <property type="component" value="Chromosome 4"/>
</dbReference>
<dbReference type="GO" id="GO:0005730">
    <property type="term" value="C:nucleolus"/>
    <property type="evidence" value="ECO:0000250"/>
    <property type="project" value="dictyBase"/>
</dbReference>
<dbReference type="GO" id="GO:0000932">
    <property type="term" value="C:P-body"/>
    <property type="evidence" value="ECO:0000318"/>
    <property type="project" value="GO_Central"/>
</dbReference>
<dbReference type="GO" id="GO:0005681">
    <property type="term" value="C:spliceosomal complex"/>
    <property type="evidence" value="ECO:0007669"/>
    <property type="project" value="UniProtKB-KW"/>
</dbReference>
<dbReference type="GO" id="GO:0097526">
    <property type="term" value="C:spliceosomal tri-snRNP complex"/>
    <property type="evidence" value="ECO:0000318"/>
    <property type="project" value="GO_Central"/>
</dbReference>
<dbReference type="GO" id="GO:0046540">
    <property type="term" value="C:U4/U6 x U5 tri-snRNP complex"/>
    <property type="evidence" value="ECO:0000250"/>
    <property type="project" value="dictyBase"/>
</dbReference>
<dbReference type="GO" id="GO:0005688">
    <property type="term" value="C:U6 snRNP"/>
    <property type="evidence" value="ECO:0000250"/>
    <property type="project" value="dictyBase"/>
</dbReference>
<dbReference type="GO" id="GO:0003723">
    <property type="term" value="F:RNA binding"/>
    <property type="evidence" value="ECO:0000250"/>
    <property type="project" value="dictyBase"/>
</dbReference>
<dbReference type="GO" id="GO:0017070">
    <property type="term" value="F:U6 snRNA binding"/>
    <property type="evidence" value="ECO:0000318"/>
    <property type="project" value="GO_Central"/>
</dbReference>
<dbReference type="GO" id="GO:0000398">
    <property type="term" value="P:mRNA splicing, via spliceosome"/>
    <property type="evidence" value="ECO:0000250"/>
    <property type="project" value="dictyBase"/>
</dbReference>
<dbReference type="GO" id="GO:0000956">
    <property type="term" value="P:nuclear-transcribed mRNA catabolic process"/>
    <property type="evidence" value="ECO:0007669"/>
    <property type="project" value="InterPro"/>
</dbReference>
<dbReference type="GO" id="GO:0033962">
    <property type="term" value="P:P-body assembly"/>
    <property type="evidence" value="ECO:0000318"/>
    <property type="project" value="GO_Central"/>
</dbReference>
<dbReference type="GO" id="GO:0000387">
    <property type="term" value="P:spliceosomal snRNP assembly"/>
    <property type="evidence" value="ECO:0000318"/>
    <property type="project" value="GO_Central"/>
</dbReference>
<dbReference type="CDD" id="cd01723">
    <property type="entry name" value="LSm4"/>
    <property type="match status" value="1"/>
</dbReference>
<dbReference type="FunFam" id="2.30.30.100:FF:000002">
    <property type="entry name" value="Small nuclear ribonucleoprotein Sm D3"/>
    <property type="match status" value="1"/>
</dbReference>
<dbReference type="Gene3D" id="2.30.30.100">
    <property type="match status" value="1"/>
</dbReference>
<dbReference type="InterPro" id="IPR034101">
    <property type="entry name" value="Lsm4"/>
</dbReference>
<dbReference type="InterPro" id="IPR027141">
    <property type="entry name" value="LSm4/Sm_D1/D3"/>
</dbReference>
<dbReference type="InterPro" id="IPR010920">
    <property type="entry name" value="LSM_dom_sf"/>
</dbReference>
<dbReference type="InterPro" id="IPR047575">
    <property type="entry name" value="Sm"/>
</dbReference>
<dbReference type="InterPro" id="IPR001163">
    <property type="entry name" value="Sm_dom_euk/arc"/>
</dbReference>
<dbReference type="PANTHER" id="PTHR23338">
    <property type="entry name" value="SMALL NUCLEAR RIBONUCLEOPROTEIN SM"/>
    <property type="match status" value="1"/>
</dbReference>
<dbReference type="Pfam" id="PF01423">
    <property type="entry name" value="LSM"/>
    <property type="match status" value="1"/>
</dbReference>
<dbReference type="SMART" id="SM00651">
    <property type="entry name" value="Sm"/>
    <property type="match status" value="1"/>
</dbReference>
<dbReference type="SUPFAM" id="SSF50182">
    <property type="entry name" value="Sm-like ribonucleoproteins"/>
    <property type="match status" value="1"/>
</dbReference>
<dbReference type="PROSITE" id="PS52002">
    <property type="entry name" value="SM"/>
    <property type="match status" value="1"/>
</dbReference>